<evidence type="ECO:0000255" key="1">
    <source>
        <dbReference type="HAMAP-Rule" id="MF_01385"/>
    </source>
</evidence>
<dbReference type="EMBL" id="CP000151">
    <property type="protein sequence ID" value="ABB07601.1"/>
    <property type="molecule type" value="Genomic_DNA"/>
</dbReference>
<dbReference type="RefSeq" id="WP_011351183.1">
    <property type="nucleotide sequence ID" value="NC_007510.1"/>
</dbReference>
<dbReference type="SMR" id="Q39IW5"/>
<dbReference type="GeneID" id="45093903"/>
<dbReference type="KEGG" id="bur:Bcep18194_A4004"/>
<dbReference type="PATRIC" id="fig|482957.22.peg.884"/>
<dbReference type="HOGENOM" id="CLU_049215_2_1_4"/>
<dbReference type="Proteomes" id="UP000002705">
    <property type="component" value="Chromosome 1"/>
</dbReference>
<dbReference type="GO" id="GO:0005737">
    <property type="term" value="C:cytoplasm"/>
    <property type="evidence" value="ECO:0007669"/>
    <property type="project" value="UniProtKB-SubCell"/>
</dbReference>
<dbReference type="GO" id="GO:0016151">
    <property type="term" value="F:nickel cation binding"/>
    <property type="evidence" value="ECO:0007669"/>
    <property type="project" value="UniProtKB-UniRule"/>
</dbReference>
<dbReference type="Gene3D" id="1.10.4190.10">
    <property type="entry name" value="Urease accessory protein UreF"/>
    <property type="match status" value="1"/>
</dbReference>
<dbReference type="HAMAP" id="MF_01385">
    <property type="entry name" value="UreF"/>
    <property type="match status" value="1"/>
</dbReference>
<dbReference type="InterPro" id="IPR002639">
    <property type="entry name" value="UreF"/>
</dbReference>
<dbReference type="InterPro" id="IPR038277">
    <property type="entry name" value="UreF_sf"/>
</dbReference>
<dbReference type="PANTHER" id="PTHR33620">
    <property type="entry name" value="UREASE ACCESSORY PROTEIN F"/>
    <property type="match status" value="1"/>
</dbReference>
<dbReference type="PANTHER" id="PTHR33620:SF1">
    <property type="entry name" value="UREASE ACCESSORY PROTEIN F"/>
    <property type="match status" value="1"/>
</dbReference>
<dbReference type="Pfam" id="PF01730">
    <property type="entry name" value="UreF"/>
    <property type="match status" value="1"/>
</dbReference>
<dbReference type="PIRSF" id="PIRSF009467">
    <property type="entry name" value="Ureas_acces_UreF"/>
    <property type="match status" value="1"/>
</dbReference>
<organism>
    <name type="scientific">Burkholderia lata (strain ATCC 17760 / DSM 23089 / LMG 22485 / NCIMB 9086 / R18194 / 383)</name>
    <dbReference type="NCBI Taxonomy" id="482957"/>
    <lineage>
        <taxon>Bacteria</taxon>
        <taxon>Pseudomonadati</taxon>
        <taxon>Pseudomonadota</taxon>
        <taxon>Betaproteobacteria</taxon>
        <taxon>Burkholderiales</taxon>
        <taxon>Burkholderiaceae</taxon>
        <taxon>Burkholderia</taxon>
        <taxon>Burkholderia cepacia complex</taxon>
    </lineage>
</organism>
<reference key="1">
    <citation type="submission" date="2005-10" db="EMBL/GenBank/DDBJ databases">
        <title>Complete sequence of chromosome 1 of Burkholderia sp. 383.</title>
        <authorList>
            <consortium name="US DOE Joint Genome Institute"/>
            <person name="Copeland A."/>
            <person name="Lucas S."/>
            <person name="Lapidus A."/>
            <person name="Barry K."/>
            <person name="Detter J.C."/>
            <person name="Glavina T."/>
            <person name="Hammon N."/>
            <person name="Israni S."/>
            <person name="Pitluck S."/>
            <person name="Chain P."/>
            <person name="Malfatti S."/>
            <person name="Shin M."/>
            <person name="Vergez L."/>
            <person name="Schmutz J."/>
            <person name="Larimer F."/>
            <person name="Land M."/>
            <person name="Kyrpides N."/>
            <person name="Lykidis A."/>
            <person name="Richardson P."/>
        </authorList>
    </citation>
    <scope>NUCLEOTIDE SEQUENCE [LARGE SCALE GENOMIC DNA]</scope>
    <source>
        <strain>ATCC 17760 / DSM 23089 / LMG 22485 / NCIMB 9086 / R18194 / 383</strain>
    </source>
</reference>
<feature type="chain" id="PRO_0000344109" description="Urease accessory protein UreF">
    <location>
        <begin position="1"/>
        <end position="226"/>
    </location>
</feature>
<sequence>MTTTELVALLHLASPALPIGAYSYSQGLEAALDANLIHDADTARDWIASGLTDVLAHGELPFLAHQLARWHAHDTPALVTENAWFIASRESAELRRETEQMGWSLAQLCASLEWGDAARRATLAAMTPIALPTAFAYAAAAHDASADAVLAAYAFGWVENQTSAALKAVPLGQLAGQRIIVALRGAIDAAVRRALATPPDAVNTFAPQLGILSARHETQYSRLFRS</sequence>
<accession>Q39IW5</accession>
<comment type="function">
    <text evidence="1">Required for maturation of urease via the functional incorporation of the urease nickel metallocenter.</text>
</comment>
<comment type="subunit">
    <text evidence="1">UreD, UreF and UreG form a complex that acts as a GTP-hydrolysis-dependent molecular chaperone, activating the urease apoprotein by helping to assemble the nickel containing metallocenter of UreC. The UreE protein probably delivers the nickel.</text>
</comment>
<comment type="subcellular location">
    <subcellularLocation>
        <location evidence="1">Cytoplasm</location>
    </subcellularLocation>
</comment>
<comment type="similarity">
    <text evidence="1">Belongs to the UreF family.</text>
</comment>
<gene>
    <name evidence="1" type="primary">ureF</name>
    <name type="ordered locus">Bcep18194_A4004</name>
</gene>
<protein>
    <recommendedName>
        <fullName evidence="1">Urease accessory protein UreF</fullName>
    </recommendedName>
</protein>
<keyword id="KW-0143">Chaperone</keyword>
<keyword id="KW-0963">Cytoplasm</keyword>
<keyword id="KW-0996">Nickel insertion</keyword>
<name>UREF_BURL3</name>
<proteinExistence type="inferred from homology"/>